<gene>
    <name evidence="1" type="primary">infA</name>
    <name type="ordered locus">Smed_0211</name>
</gene>
<reference key="1">
    <citation type="submission" date="2007-06" db="EMBL/GenBank/DDBJ databases">
        <title>Complete sequence of Sinorhizobium medicae WSM419 chromosome.</title>
        <authorList>
            <consortium name="US DOE Joint Genome Institute"/>
            <person name="Copeland A."/>
            <person name="Lucas S."/>
            <person name="Lapidus A."/>
            <person name="Barry K."/>
            <person name="Glavina del Rio T."/>
            <person name="Dalin E."/>
            <person name="Tice H."/>
            <person name="Pitluck S."/>
            <person name="Chain P."/>
            <person name="Malfatti S."/>
            <person name="Shin M."/>
            <person name="Vergez L."/>
            <person name="Schmutz J."/>
            <person name="Larimer F."/>
            <person name="Land M."/>
            <person name="Hauser L."/>
            <person name="Kyrpides N."/>
            <person name="Mikhailova N."/>
            <person name="Reeve W.G."/>
            <person name="Richardson P."/>
        </authorList>
    </citation>
    <scope>NUCLEOTIDE SEQUENCE [LARGE SCALE GENOMIC DNA]</scope>
    <source>
        <strain>WSM419</strain>
    </source>
</reference>
<sequence>MAKEEVLEFPGVVTELLPNATFRVKLENEHEIIAHTAGRMRKNRIRVLAGDKVLVEMTPYDLTKGRITYRFK</sequence>
<comment type="function">
    <text evidence="1">One of the essential components for the initiation of protein synthesis. Stabilizes the binding of IF-2 and IF-3 on the 30S subunit to which N-formylmethionyl-tRNA(fMet) subsequently binds. Helps modulate mRNA selection, yielding the 30S pre-initiation complex (PIC). Upon addition of the 50S ribosomal subunit IF-1, IF-2 and IF-3 are released leaving the mature 70S translation initiation complex.</text>
</comment>
<comment type="subunit">
    <text evidence="1">Component of the 30S ribosomal translation pre-initiation complex which assembles on the 30S ribosome in the order IF-2 and IF-3, IF-1 and N-formylmethionyl-tRNA(fMet); mRNA recruitment can occur at any time during PIC assembly.</text>
</comment>
<comment type="subcellular location">
    <subcellularLocation>
        <location evidence="1">Cytoplasm</location>
    </subcellularLocation>
</comment>
<comment type="similarity">
    <text evidence="1">Belongs to the IF-1 family.</text>
</comment>
<comment type="sequence caution" evidence="2">
    <conflict type="erroneous initiation">
        <sequence resource="EMBL-CDS" id="ABR59070"/>
    </conflict>
    <text>Extended N-terminus.</text>
</comment>
<keyword id="KW-0963">Cytoplasm</keyword>
<keyword id="KW-0396">Initiation factor</keyword>
<keyword id="KW-0648">Protein biosynthesis</keyword>
<keyword id="KW-0694">RNA-binding</keyword>
<keyword id="KW-0699">rRNA-binding</keyword>
<evidence type="ECO:0000255" key="1">
    <source>
        <dbReference type="HAMAP-Rule" id="MF_00075"/>
    </source>
</evidence>
<evidence type="ECO:0000305" key="2"/>
<accession>A6U5Z0</accession>
<dbReference type="EMBL" id="CP000738">
    <property type="protein sequence ID" value="ABR59070.1"/>
    <property type="status" value="ALT_INIT"/>
    <property type="molecule type" value="Genomic_DNA"/>
</dbReference>
<dbReference type="RefSeq" id="WP_004435948.1">
    <property type="nucleotide sequence ID" value="NC_009636.1"/>
</dbReference>
<dbReference type="RefSeq" id="YP_001325905.1">
    <property type="nucleotide sequence ID" value="NC_009636.1"/>
</dbReference>
<dbReference type="SMR" id="A6U5Z0"/>
<dbReference type="STRING" id="366394.Smed_0211"/>
<dbReference type="GeneID" id="89574917"/>
<dbReference type="KEGG" id="smd:Smed_0211"/>
<dbReference type="PATRIC" id="fig|366394.8.peg.3275"/>
<dbReference type="eggNOG" id="COG0361">
    <property type="taxonomic scope" value="Bacteria"/>
</dbReference>
<dbReference type="HOGENOM" id="CLU_151267_0_2_5"/>
<dbReference type="OrthoDB" id="9803250at2"/>
<dbReference type="Proteomes" id="UP000001108">
    <property type="component" value="Chromosome"/>
</dbReference>
<dbReference type="GO" id="GO:0005829">
    <property type="term" value="C:cytosol"/>
    <property type="evidence" value="ECO:0007669"/>
    <property type="project" value="TreeGrafter"/>
</dbReference>
<dbReference type="GO" id="GO:0043022">
    <property type="term" value="F:ribosome binding"/>
    <property type="evidence" value="ECO:0007669"/>
    <property type="project" value="UniProtKB-UniRule"/>
</dbReference>
<dbReference type="GO" id="GO:0019843">
    <property type="term" value="F:rRNA binding"/>
    <property type="evidence" value="ECO:0007669"/>
    <property type="project" value="UniProtKB-UniRule"/>
</dbReference>
<dbReference type="GO" id="GO:0003743">
    <property type="term" value="F:translation initiation factor activity"/>
    <property type="evidence" value="ECO:0007669"/>
    <property type="project" value="UniProtKB-UniRule"/>
</dbReference>
<dbReference type="CDD" id="cd04451">
    <property type="entry name" value="S1_IF1"/>
    <property type="match status" value="1"/>
</dbReference>
<dbReference type="FunFam" id="2.40.50.140:FF:000002">
    <property type="entry name" value="Translation initiation factor IF-1"/>
    <property type="match status" value="1"/>
</dbReference>
<dbReference type="Gene3D" id="2.40.50.140">
    <property type="entry name" value="Nucleic acid-binding proteins"/>
    <property type="match status" value="1"/>
</dbReference>
<dbReference type="HAMAP" id="MF_00075">
    <property type="entry name" value="IF_1"/>
    <property type="match status" value="1"/>
</dbReference>
<dbReference type="InterPro" id="IPR012340">
    <property type="entry name" value="NA-bd_OB-fold"/>
</dbReference>
<dbReference type="InterPro" id="IPR006196">
    <property type="entry name" value="RNA-binding_domain_S1_IF1"/>
</dbReference>
<dbReference type="InterPro" id="IPR004368">
    <property type="entry name" value="TIF_IF1"/>
</dbReference>
<dbReference type="NCBIfam" id="TIGR00008">
    <property type="entry name" value="infA"/>
    <property type="match status" value="1"/>
</dbReference>
<dbReference type="PANTHER" id="PTHR33370">
    <property type="entry name" value="TRANSLATION INITIATION FACTOR IF-1, CHLOROPLASTIC"/>
    <property type="match status" value="1"/>
</dbReference>
<dbReference type="PANTHER" id="PTHR33370:SF1">
    <property type="entry name" value="TRANSLATION INITIATION FACTOR IF-1, CHLOROPLASTIC"/>
    <property type="match status" value="1"/>
</dbReference>
<dbReference type="Pfam" id="PF01176">
    <property type="entry name" value="eIF-1a"/>
    <property type="match status" value="1"/>
</dbReference>
<dbReference type="SUPFAM" id="SSF50249">
    <property type="entry name" value="Nucleic acid-binding proteins"/>
    <property type="match status" value="1"/>
</dbReference>
<dbReference type="PROSITE" id="PS50832">
    <property type="entry name" value="S1_IF1_TYPE"/>
    <property type="match status" value="1"/>
</dbReference>
<organism>
    <name type="scientific">Sinorhizobium medicae (strain WSM419)</name>
    <name type="common">Ensifer medicae</name>
    <dbReference type="NCBI Taxonomy" id="366394"/>
    <lineage>
        <taxon>Bacteria</taxon>
        <taxon>Pseudomonadati</taxon>
        <taxon>Pseudomonadota</taxon>
        <taxon>Alphaproteobacteria</taxon>
        <taxon>Hyphomicrobiales</taxon>
        <taxon>Rhizobiaceae</taxon>
        <taxon>Sinorhizobium/Ensifer group</taxon>
        <taxon>Sinorhizobium</taxon>
    </lineage>
</organism>
<name>IF1_SINMW</name>
<feature type="chain" id="PRO_0000338926" description="Translation initiation factor IF-1">
    <location>
        <begin position="1"/>
        <end position="72"/>
    </location>
</feature>
<feature type="domain" description="S1-like" evidence="1">
    <location>
        <begin position="1"/>
        <end position="72"/>
    </location>
</feature>
<proteinExistence type="inferred from homology"/>
<protein>
    <recommendedName>
        <fullName evidence="1">Translation initiation factor IF-1</fullName>
    </recommendedName>
</protein>